<keyword id="KW-0929">Antimicrobial</keyword>
<keyword id="KW-0081">Bacteriolytic enzyme</keyword>
<keyword id="KW-0131">Cell cycle</keyword>
<keyword id="KW-0132">Cell division</keyword>
<keyword id="KW-0961">Cell wall biogenesis/degradation</keyword>
<keyword id="KW-0378">Hydrolase</keyword>
<keyword id="KW-0677">Repeat</keyword>
<keyword id="KW-0964">Secreted</keyword>
<keyword id="KW-0717">Septation</keyword>
<keyword id="KW-0732">Signal</keyword>
<keyword id="KW-0843">Virulence</keyword>
<protein>
    <recommendedName>
        <fullName>N-acetylmuramoyl-L-alanine amidase sle1</fullName>
        <ecNumber>3.5.1.28</ecNumber>
    </recommendedName>
</protein>
<gene>
    <name type="primary">sle1</name>
    <name type="synonym">aaa</name>
    <name type="ordered locus">MW0419</name>
</gene>
<reference key="1">
    <citation type="journal article" date="2002" name="Lancet">
        <title>Genome and virulence determinants of high virulence community-acquired MRSA.</title>
        <authorList>
            <person name="Baba T."/>
            <person name="Takeuchi F."/>
            <person name="Kuroda M."/>
            <person name="Yuzawa H."/>
            <person name="Aoki K."/>
            <person name="Oguchi A."/>
            <person name="Nagai Y."/>
            <person name="Iwama N."/>
            <person name="Asano K."/>
            <person name="Naimi T."/>
            <person name="Kuroda H."/>
            <person name="Cui L."/>
            <person name="Yamamoto K."/>
            <person name="Hiramatsu K."/>
        </authorList>
    </citation>
    <scope>NUCLEOTIDE SEQUENCE [LARGE SCALE GENOMIC DNA]</scope>
    <source>
        <strain>MW2</strain>
    </source>
</reference>
<comment type="function">
    <text evidence="1">Peptidoglycan hydrolase involved in the splitting of the septum during cell division.</text>
</comment>
<comment type="catalytic activity">
    <reaction>
        <text>Hydrolyzes the link between N-acetylmuramoyl residues and L-amino acid residues in certain cell-wall glycopeptides.</text>
        <dbReference type="EC" id="3.5.1.28"/>
    </reaction>
</comment>
<comment type="subcellular location">
    <subcellularLocation>
        <location evidence="1">Secreted</location>
    </subcellularLocation>
    <subcellularLocation>
        <location evidence="1">Cell surface</location>
    </subcellularLocation>
</comment>
<proteinExistence type="inferred from homology"/>
<feature type="signal peptide" evidence="2">
    <location>
        <begin position="1"/>
        <end position="25"/>
    </location>
</feature>
<feature type="chain" id="PRO_0000231626" description="N-acetylmuramoyl-L-alanine amidase sle1">
    <location>
        <begin position="26"/>
        <end position="334"/>
    </location>
</feature>
<feature type="domain" description="LysM 1" evidence="4">
    <location>
        <begin position="27"/>
        <end position="70"/>
    </location>
</feature>
<feature type="domain" description="LysM 2" evidence="4">
    <location>
        <begin position="91"/>
        <end position="134"/>
    </location>
</feature>
<feature type="domain" description="LysM 3" evidence="4">
    <location>
        <begin position="158"/>
        <end position="201"/>
    </location>
</feature>
<feature type="domain" description="Peptidase C51" evidence="3">
    <location>
        <begin position="210"/>
        <end position="334"/>
    </location>
</feature>
<feature type="region of interest" description="Disordered" evidence="5">
    <location>
        <begin position="71"/>
        <end position="90"/>
    </location>
</feature>
<feature type="compositionally biased region" description="Low complexity" evidence="5">
    <location>
        <begin position="71"/>
        <end position="86"/>
    </location>
</feature>
<dbReference type="EC" id="3.5.1.28"/>
<dbReference type="EMBL" id="BA000033">
    <property type="protein sequence ID" value="BAB94284.1"/>
    <property type="molecule type" value="Genomic_DNA"/>
</dbReference>
<dbReference type="RefSeq" id="WP_001170264.1">
    <property type="nucleotide sequence ID" value="NC_003923.1"/>
</dbReference>
<dbReference type="SMR" id="Q7A1T4"/>
<dbReference type="CAZy" id="CBM50">
    <property type="family name" value="Carbohydrate-Binding Module Family 50"/>
</dbReference>
<dbReference type="KEGG" id="sam:MW0419"/>
<dbReference type="HOGENOM" id="CLU_016043_1_3_9"/>
<dbReference type="GO" id="GO:0009986">
    <property type="term" value="C:cell surface"/>
    <property type="evidence" value="ECO:0007669"/>
    <property type="project" value="UniProtKB-SubCell"/>
</dbReference>
<dbReference type="GO" id="GO:0005576">
    <property type="term" value="C:extracellular region"/>
    <property type="evidence" value="ECO:0007669"/>
    <property type="project" value="UniProtKB-SubCell"/>
</dbReference>
<dbReference type="GO" id="GO:0008932">
    <property type="term" value="F:lytic endotransglycosylase activity"/>
    <property type="evidence" value="ECO:0007669"/>
    <property type="project" value="TreeGrafter"/>
</dbReference>
<dbReference type="GO" id="GO:0008745">
    <property type="term" value="F:N-acetylmuramoyl-L-alanine amidase activity"/>
    <property type="evidence" value="ECO:0007669"/>
    <property type="project" value="UniProtKB-EC"/>
</dbReference>
<dbReference type="GO" id="GO:0071555">
    <property type="term" value="P:cell wall organization"/>
    <property type="evidence" value="ECO:0007669"/>
    <property type="project" value="UniProtKB-KW"/>
</dbReference>
<dbReference type="GO" id="GO:0042742">
    <property type="term" value="P:defense response to bacterium"/>
    <property type="evidence" value="ECO:0007669"/>
    <property type="project" value="UniProtKB-KW"/>
</dbReference>
<dbReference type="GO" id="GO:0000917">
    <property type="term" value="P:division septum assembly"/>
    <property type="evidence" value="ECO:0007669"/>
    <property type="project" value="UniProtKB-KW"/>
</dbReference>
<dbReference type="GO" id="GO:0031640">
    <property type="term" value="P:killing of cells of another organism"/>
    <property type="evidence" value="ECO:0007669"/>
    <property type="project" value="UniProtKB-KW"/>
</dbReference>
<dbReference type="CDD" id="cd00118">
    <property type="entry name" value="LysM"/>
    <property type="match status" value="3"/>
</dbReference>
<dbReference type="Gene3D" id="3.90.1720.10">
    <property type="entry name" value="endopeptidase domain like (from Nostoc punctiforme)"/>
    <property type="match status" value="1"/>
</dbReference>
<dbReference type="Gene3D" id="3.10.350.10">
    <property type="entry name" value="LysM domain"/>
    <property type="match status" value="3"/>
</dbReference>
<dbReference type="InterPro" id="IPR007921">
    <property type="entry name" value="CHAP_dom"/>
</dbReference>
<dbReference type="InterPro" id="IPR018392">
    <property type="entry name" value="LysM_dom"/>
</dbReference>
<dbReference type="InterPro" id="IPR036779">
    <property type="entry name" value="LysM_dom_sf"/>
</dbReference>
<dbReference type="InterPro" id="IPR038765">
    <property type="entry name" value="Papain-like_cys_pep_sf"/>
</dbReference>
<dbReference type="PANTHER" id="PTHR33734">
    <property type="entry name" value="LYSM DOMAIN-CONTAINING GPI-ANCHORED PROTEIN 2"/>
    <property type="match status" value="1"/>
</dbReference>
<dbReference type="PANTHER" id="PTHR33734:SF22">
    <property type="entry name" value="MEMBRANE-BOUND LYTIC MUREIN TRANSGLYCOSYLASE D"/>
    <property type="match status" value="1"/>
</dbReference>
<dbReference type="Pfam" id="PF05257">
    <property type="entry name" value="CHAP"/>
    <property type="match status" value="1"/>
</dbReference>
<dbReference type="Pfam" id="PF01476">
    <property type="entry name" value="LysM"/>
    <property type="match status" value="3"/>
</dbReference>
<dbReference type="SMART" id="SM00257">
    <property type="entry name" value="LysM"/>
    <property type="match status" value="3"/>
</dbReference>
<dbReference type="SUPFAM" id="SSF54001">
    <property type="entry name" value="Cysteine proteinases"/>
    <property type="match status" value="1"/>
</dbReference>
<dbReference type="SUPFAM" id="SSF54106">
    <property type="entry name" value="LysM domain"/>
    <property type="match status" value="3"/>
</dbReference>
<dbReference type="PROSITE" id="PS50911">
    <property type="entry name" value="CHAP"/>
    <property type="match status" value="1"/>
</dbReference>
<dbReference type="PROSITE" id="PS51782">
    <property type="entry name" value="LYSM"/>
    <property type="match status" value="3"/>
</dbReference>
<organism>
    <name type="scientific">Staphylococcus aureus (strain MW2)</name>
    <dbReference type="NCBI Taxonomy" id="196620"/>
    <lineage>
        <taxon>Bacteria</taxon>
        <taxon>Bacillati</taxon>
        <taxon>Bacillota</taxon>
        <taxon>Bacilli</taxon>
        <taxon>Bacillales</taxon>
        <taxon>Staphylococcaceae</taxon>
        <taxon>Staphylococcus</taxon>
    </lineage>
</organism>
<evidence type="ECO:0000250" key="1"/>
<evidence type="ECO:0000255" key="2"/>
<evidence type="ECO:0000255" key="3">
    <source>
        <dbReference type="PROSITE-ProRule" id="PRU00048"/>
    </source>
</evidence>
<evidence type="ECO:0000255" key="4">
    <source>
        <dbReference type="PROSITE-ProRule" id="PRU01118"/>
    </source>
</evidence>
<evidence type="ECO:0000256" key="5">
    <source>
        <dbReference type="SAM" id="MobiDB-lite"/>
    </source>
</evidence>
<name>SLE1_STAAW</name>
<accession>Q7A1T4</accession>
<sequence>MQKKVIAAIIGTSAISAVAATQANAATTHTVKPGESVWAISNKYGISIAKLKSLNNLTSNLIFPNQVLKVSGSSNSTSNSSRPSTNSGGGSYYTVQAGDSLSLIASKYGTTYQNIMRLNGLNNFFIYPGQKLKVSGTASSSNAASNSSRPSTNSGGGSYYTVQAGDSLSLIASKYGTTYQKIMSLNGLNNFFIYPGQKLKVTGNASTNSGSATTTNRGYNTPVFSHQNLYTWGQCTYHVFNRRAEIGKGISTYWWNANNWDNAAAADGYTIDNRPTVGSIAQTDVGYYGHVMFVERVNNDGSILVSEMNYSAAPGILTYRTVPAYQVNNYRYIH</sequence>